<organism>
    <name type="scientific">Mycobacterium tuberculosis (strain ATCC 25618 / H37Rv)</name>
    <dbReference type="NCBI Taxonomy" id="83332"/>
    <lineage>
        <taxon>Bacteria</taxon>
        <taxon>Bacillati</taxon>
        <taxon>Actinomycetota</taxon>
        <taxon>Actinomycetes</taxon>
        <taxon>Mycobacteriales</taxon>
        <taxon>Mycobacteriaceae</taxon>
        <taxon>Mycobacterium</taxon>
        <taxon>Mycobacterium tuberculosis complex</taxon>
    </lineage>
</organism>
<proteinExistence type="evidence at protein level"/>
<keyword id="KW-0046">Antibiotic resistance</keyword>
<keyword id="KW-1003">Cell membrane</keyword>
<keyword id="KW-0472">Membrane</keyword>
<keyword id="KW-1185">Reference proteome</keyword>
<keyword id="KW-0812">Transmembrane</keyword>
<keyword id="KW-1133">Transmembrane helix</keyword>
<keyword id="KW-0813">Transport</keyword>
<name>MMR_MYCTU</name>
<dbReference type="EMBL" id="AL123456">
    <property type="protein sequence ID" value="CCP45874.1"/>
    <property type="molecule type" value="Genomic_DNA"/>
</dbReference>
<dbReference type="PIR" id="B70650">
    <property type="entry name" value="B70650"/>
</dbReference>
<dbReference type="RefSeq" id="WP_003415995.1">
    <property type="nucleotide sequence ID" value="NZ_NVQJ01000011.1"/>
</dbReference>
<dbReference type="RefSeq" id="YP_177922.1">
    <property type="nucleotide sequence ID" value="NC_000962.3"/>
</dbReference>
<dbReference type="SMR" id="P9WGF1"/>
<dbReference type="FunCoup" id="P9WGF1">
    <property type="interactions" value="5"/>
</dbReference>
<dbReference type="STRING" id="83332.Rv3065"/>
<dbReference type="PaxDb" id="83332-Rv3065"/>
<dbReference type="DNASU" id="887550"/>
<dbReference type="GeneID" id="45427058"/>
<dbReference type="GeneID" id="887550"/>
<dbReference type="KEGG" id="mtu:Rv3065"/>
<dbReference type="KEGG" id="mtv:RVBD_3065"/>
<dbReference type="TubercuList" id="Rv3065"/>
<dbReference type="eggNOG" id="COG2076">
    <property type="taxonomic scope" value="Bacteria"/>
</dbReference>
<dbReference type="InParanoid" id="P9WGF1"/>
<dbReference type="OrthoDB" id="21828at2"/>
<dbReference type="PhylomeDB" id="P9WGF1"/>
<dbReference type="SABIO-RK" id="P9WGF1"/>
<dbReference type="Proteomes" id="UP000001584">
    <property type="component" value="Chromosome"/>
</dbReference>
<dbReference type="GO" id="GO:0005886">
    <property type="term" value="C:plasma membrane"/>
    <property type="evidence" value="ECO:0000318"/>
    <property type="project" value="GO_Central"/>
</dbReference>
<dbReference type="GO" id="GO:0015562">
    <property type="term" value="F:efflux transmembrane transporter activity"/>
    <property type="evidence" value="ECO:0000315"/>
    <property type="project" value="MTBBASE"/>
</dbReference>
<dbReference type="GO" id="GO:0022857">
    <property type="term" value="F:transmembrane transporter activity"/>
    <property type="evidence" value="ECO:0000314"/>
    <property type="project" value="MTBBASE"/>
</dbReference>
<dbReference type="GO" id="GO:0046677">
    <property type="term" value="P:response to antibiotic"/>
    <property type="evidence" value="ECO:0007669"/>
    <property type="project" value="UniProtKB-KW"/>
</dbReference>
<dbReference type="GO" id="GO:0055085">
    <property type="term" value="P:transmembrane transport"/>
    <property type="evidence" value="ECO:0000314"/>
    <property type="project" value="MTBBASE"/>
</dbReference>
<dbReference type="FunFam" id="1.10.3730.20:FF:000001">
    <property type="entry name" value="Quaternary ammonium compound resistance transporter SugE"/>
    <property type="match status" value="1"/>
</dbReference>
<dbReference type="Gene3D" id="1.10.3730.20">
    <property type="match status" value="1"/>
</dbReference>
<dbReference type="InterPro" id="IPR000390">
    <property type="entry name" value="Small_drug/metabolite_transptr"/>
</dbReference>
<dbReference type="InterPro" id="IPR045324">
    <property type="entry name" value="Small_multidrug_res"/>
</dbReference>
<dbReference type="PANTHER" id="PTHR30561:SF1">
    <property type="entry name" value="MULTIDRUG TRANSPORTER EMRE"/>
    <property type="match status" value="1"/>
</dbReference>
<dbReference type="PANTHER" id="PTHR30561">
    <property type="entry name" value="SMR FAMILY PROTON-DEPENDENT DRUG EFFLUX TRANSPORTER SUGE"/>
    <property type="match status" value="1"/>
</dbReference>
<dbReference type="Pfam" id="PF00893">
    <property type="entry name" value="Multi_Drug_Res"/>
    <property type="match status" value="1"/>
</dbReference>
<dbReference type="SUPFAM" id="SSF103481">
    <property type="entry name" value="Multidrug resistance efflux transporter EmrE"/>
    <property type="match status" value="1"/>
</dbReference>
<comment type="function">
    <text evidence="2 3">Multidrug efflux pump. Confers resistance to tetraphenylphosphonium (TPP), erythromycin, ethidium bromide, acriflavine, safranin O, pyronin Y and methyl viologen.</text>
</comment>
<comment type="biophysicochemical properties">
    <kinetics>
        <KM evidence="2">943 uM for methyl viologen</KM>
        <Vmax evidence="2">22085.0 nmol/min/mg enzyme with methyl viologen as substrate</Vmax>
    </kinetics>
</comment>
<comment type="subcellular location">
    <subcellularLocation>
        <location evidence="2">Cell membrane</location>
        <topology evidence="2">Multi-pass membrane protein</topology>
    </subcellularLocation>
</comment>
<comment type="miscellaneous">
    <text>Extrusion of TPP is inhibited by CCCP.</text>
</comment>
<comment type="similarity">
    <text evidence="4">Belongs to the drug/metabolite transporter (DMT) superfamily. Small multidrug resistance (SMR) (TC 2.A.7.1) family. Mmr subfamily.</text>
</comment>
<protein>
    <recommendedName>
        <fullName>Multidrug resistance protein Mmr</fullName>
    </recommendedName>
</protein>
<feature type="chain" id="PRO_0000108120" description="Multidrug resistance protein Mmr">
    <location>
        <begin position="1"/>
        <end position="107"/>
    </location>
</feature>
<feature type="transmembrane region" description="Helical" evidence="1">
    <location>
        <begin position="2"/>
        <end position="19"/>
    </location>
</feature>
<feature type="transmembrane region" description="Helical" evidence="1">
    <location>
        <begin position="29"/>
        <end position="51"/>
    </location>
</feature>
<feature type="transmembrane region" description="Helical" evidence="1">
    <location>
        <begin position="58"/>
        <end position="80"/>
    </location>
</feature>
<feature type="transmembrane region" description="Helical" evidence="1">
    <location>
        <begin position="84"/>
        <end position="106"/>
    </location>
</feature>
<gene>
    <name type="primary">mmr</name>
    <name type="ordered locus">Rv3065</name>
    <name type="ORF">MTCY22D7.17c</name>
</gene>
<reference key="1">
    <citation type="journal article" date="1998" name="Nature">
        <title>Deciphering the biology of Mycobacterium tuberculosis from the complete genome sequence.</title>
        <authorList>
            <person name="Cole S.T."/>
            <person name="Brosch R."/>
            <person name="Parkhill J."/>
            <person name="Garnier T."/>
            <person name="Churcher C.M."/>
            <person name="Harris D.E."/>
            <person name="Gordon S.V."/>
            <person name="Eiglmeier K."/>
            <person name="Gas S."/>
            <person name="Barry C.E. III"/>
            <person name="Tekaia F."/>
            <person name="Badcock K."/>
            <person name="Basham D."/>
            <person name="Brown D."/>
            <person name="Chillingworth T."/>
            <person name="Connor R."/>
            <person name="Davies R.M."/>
            <person name="Devlin K."/>
            <person name="Feltwell T."/>
            <person name="Gentles S."/>
            <person name="Hamlin N."/>
            <person name="Holroyd S."/>
            <person name="Hornsby T."/>
            <person name="Jagels K."/>
            <person name="Krogh A."/>
            <person name="McLean J."/>
            <person name="Moule S."/>
            <person name="Murphy L.D."/>
            <person name="Oliver S."/>
            <person name="Osborne J."/>
            <person name="Quail M.A."/>
            <person name="Rajandream M.A."/>
            <person name="Rogers J."/>
            <person name="Rutter S."/>
            <person name="Seeger K."/>
            <person name="Skelton S."/>
            <person name="Squares S."/>
            <person name="Squares R."/>
            <person name="Sulston J.E."/>
            <person name="Taylor K."/>
            <person name="Whitehead S."/>
            <person name="Barrell B.G."/>
        </authorList>
    </citation>
    <scope>NUCLEOTIDE SEQUENCE [LARGE SCALE GENOMIC DNA]</scope>
    <source>
        <strain>ATCC 25618 / H37Rv</strain>
    </source>
</reference>
<reference key="2">
    <citation type="journal article" date="1998" name="J. Bacteriol.">
        <title>mmr, a Mycobacterium tuberculosis gene conferring resistance to small cationic dyes and inhibitors.</title>
        <authorList>
            <person name="De Rossi E."/>
            <person name="Branzoni M."/>
            <person name="Cantoni R."/>
            <person name="Milano A."/>
            <person name="Riccardi G."/>
            <person name="Ciferri O."/>
        </authorList>
    </citation>
    <scope>FUNCTION</scope>
    <scope>INHIBITION BY CCCP</scope>
    <source>
        <strain>ATCC 25618 / H37Rv</strain>
    </source>
</reference>
<reference key="3">
    <citation type="journal article" date="2001" name="J. Biol. Chem.">
        <title>Functional analysis of novel multidrug transporters from human pathogens.</title>
        <authorList>
            <person name="Ninio S."/>
            <person name="Rotem D."/>
            <person name="Schuldiner S."/>
        </authorList>
    </citation>
    <scope>FUNCTION</scope>
    <scope>BIOPHYSICOCHEMICAL PROPERTIES</scope>
    <scope>SUBCELLULAR LOCATION</scope>
</reference>
<accession>P9WGF1</accession>
<accession>L0TE91</accession>
<accession>P69926</accession>
<accession>P95094</accession>
<evidence type="ECO:0000255" key="1"/>
<evidence type="ECO:0000269" key="2">
    <source>
    </source>
</evidence>
<evidence type="ECO:0000269" key="3">
    <source>
    </source>
</evidence>
<evidence type="ECO:0000305" key="4"/>
<sequence>MIYLYLLCAIFAEVVATSLLKSTEGFTRLWPTVGCLVGYGIAFALLALSISHGMQTDVAYALWSAIGTAAIVLVAVLFLGSPISVMKVVGVGLIVVGVVTLNLAGAH</sequence>